<organism>
    <name type="scientific">Bacillus sp. (strain KSM-64)</name>
    <dbReference type="NCBI Taxonomy" id="86039"/>
    <lineage>
        <taxon>Bacteria</taxon>
        <taxon>Bacillati</taxon>
        <taxon>Bacillota</taxon>
        <taxon>Bacilli</taxon>
        <taxon>Bacillales</taxon>
        <taxon>Bacillaceae</taxon>
        <taxon>Bacillus</taxon>
    </lineage>
</organism>
<protein>
    <recommendedName>
        <fullName evidence="1">tRNA pseudouridine synthase A</fullName>
        <ecNumber evidence="1">5.4.99.12</ecNumber>
    </recommendedName>
    <alternativeName>
        <fullName evidence="1">tRNA pseudouridine(38-40) synthase</fullName>
    </alternativeName>
    <alternativeName>
        <fullName evidence="1">tRNA pseudouridylate synthase I</fullName>
    </alternativeName>
    <alternativeName>
        <fullName evidence="1">tRNA-uridine isomerase I</fullName>
    </alternativeName>
</protein>
<name>TRUA_BACSV</name>
<gene>
    <name evidence="1" type="primary">truA</name>
</gene>
<keyword id="KW-0413">Isomerase</keyword>
<keyword id="KW-0819">tRNA processing</keyword>
<dbReference type="EC" id="5.4.99.12" evidence="1"/>
<dbReference type="EMBL" id="M84963">
    <property type="protein sequence ID" value="AAA73188.1"/>
    <property type="molecule type" value="Genomic_DNA"/>
</dbReference>
<dbReference type="PIR" id="JT0612">
    <property type="entry name" value="JT0612"/>
</dbReference>
<dbReference type="SMR" id="Q45557"/>
<dbReference type="GO" id="GO:0003723">
    <property type="term" value="F:RNA binding"/>
    <property type="evidence" value="ECO:0007669"/>
    <property type="project" value="InterPro"/>
</dbReference>
<dbReference type="GO" id="GO:0160147">
    <property type="term" value="F:tRNA pseudouridine(38-40) synthase activity"/>
    <property type="evidence" value="ECO:0007669"/>
    <property type="project" value="UniProtKB-EC"/>
</dbReference>
<dbReference type="GO" id="GO:0031119">
    <property type="term" value="P:tRNA pseudouridine synthesis"/>
    <property type="evidence" value="ECO:0007669"/>
    <property type="project" value="UniProtKB-UniRule"/>
</dbReference>
<dbReference type="CDD" id="cd02570">
    <property type="entry name" value="PseudoU_synth_EcTruA"/>
    <property type="match status" value="1"/>
</dbReference>
<dbReference type="FunFam" id="3.30.70.580:FF:000001">
    <property type="entry name" value="tRNA pseudouridine synthase A"/>
    <property type="match status" value="1"/>
</dbReference>
<dbReference type="Gene3D" id="3.30.70.660">
    <property type="entry name" value="Pseudouridine synthase I, catalytic domain, C-terminal subdomain"/>
    <property type="match status" value="1"/>
</dbReference>
<dbReference type="Gene3D" id="3.30.70.580">
    <property type="entry name" value="Pseudouridine synthase I, catalytic domain, N-terminal subdomain"/>
    <property type="match status" value="1"/>
</dbReference>
<dbReference type="HAMAP" id="MF_00171">
    <property type="entry name" value="TruA"/>
    <property type="match status" value="1"/>
</dbReference>
<dbReference type="InterPro" id="IPR020103">
    <property type="entry name" value="PsdUridine_synth_cat_dom_sf"/>
</dbReference>
<dbReference type="InterPro" id="IPR001406">
    <property type="entry name" value="PsdUridine_synth_TruA"/>
</dbReference>
<dbReference type="InterPro" id="IPR020097">
    <property type="entry name" value="PsdUridine_synth_TruA_a/b_dom"/>
</dbReference>
<dbReference type="InterPro" id="IPR020095">
    <property type="entry name" value="PsdUridine_synth_TruA_C"/>
</dbReference>
<dbReference type="InterPro" id="IPR020094">
    <property type="entry name" value="TruA/RsuA/RluB/E/F_N"/>
</dbReference>
<dbReference type="NCBIfam" id="TIGR00071">
    <property type="entry name" value="hisT_truA"/>
    <property type="match status" value="1"/>
</dbReference>
<dbReference type="PANTHER" id="PTHR11142">
    <property type="entry name" value="PSEUDOURIDYLATE SYNTHASE"/>
    <property type="match status" value="1"/>
</dbReference>
<dbReference type="PANTHER" id="PTHR11142:SF22">
    <property type="entry name" value="TRNA PSEUDOURIDINE SYNTHASE A 2"/>
    <property type="match status" value="1"/>
</dbReference>
<dbReference type="Pfam" id="PF01416">
    <property type="entry name" value="PseudoU_synth_1"/>
    <property type="match status" value="2"/>
</dbReference>
<dbReference type="PIRSF" id="PIRSF001430">
    <property type="entry name" value="tRNA_psdUrid_synth"/>
    <property type="match status" value="1"/>
</dbReference>
<dbReference type="SUPFAM" id="SSF55120">
    <property type="entry name" value="Pseudouridine synthase"/>
    <property type="match status" value="1"/>
</dbReference>
<proteinExistence type="inferred from homology"/>
<sequence length="244" mass="27866">MNNYKLMIQYDGGRYKGWQRLGNGENTIQGKIETVLSEMVGRKIEIIGSGRTDAGVHALGQVANVKLSENFTVKEVKEYLNRYLPHDISVTEVTLVPDRFHSRYNAKDKTYLYKIWNEDYTHPFMRKYSLHIEKKLHIDNMVKASQLFVGEHDFTAFSNAKSKKKTNTRTIHSITIQDNQGFIDIRVCGDGFLYNMVRKMVGTLIEVGLGEKEPEQVLTILESKDRSQAGFADATGLYLEGISF</sequence>
<accession>Q45557</accession>
<reference key="1">
    <citation type="journal article" date="1992" name="Biosci. Biotechnol. Biochem.">
        <title>Nucleotide sequence of the gene for an alkaline endoglucanase from an alkalophilic Bacillus and its expression in Escherichia coli and Bacillus subtilis.</title>
        <authorList>
            <person name="Sumitomo N."/>
            <person name="Ozaki K."/>
            <person name="Kawai S."/>
            <person name="Ito S."/>
        </authorList>
    </citation>
    <scope>NUCLEOTIDE SEQUENCE [GENOMIC DNA]</scope>
</reference>
<feature type="chain" id="PRO_0000057333" description="tRNA pseudouridine synthase A">
    <location>
        <begin position="1"/>
        <end position="244"/>
    </location>
</feature>
<feature type="active site" description="Nucleophile" evidence="1">
    <location>
        <position position="53"/>
    </location>
</feature>
<feature type="binding site" evidence="1">
    <location>
        <position position="111"/>
    </location>
    <ligand>
        <name>substrate</name>
    </ligand>
</feature>
<comment type="function">
    <text evidence="1">Formation of pseudouridine at positions 38, 39 and 40 in the anticodon stem and loop of transfer RNAs.</text>
</comment>
<comment type="catalytic activity">
    <reaction evidence="1">
        <text>uridine(38/39/40) in tRNA = pseudouridine(38/39/40) in tRNA</text>
        <dbReference type="Rhea" id="RHEA:22376"/>
        <dbReference type="Rhea" id="RHEA-COMP:10085"/>
        <dbReference type="Rhea" id="RHEA-COMP:10087"/>
        <dbReference type="ChEBI" id="CHEBI:65314"/>
        <dbReference type="ChEBI" id="CHEBI:65315"/>
        <dbReference type="EC" id="5.4.99.12"/>
    </reaction>
</comment>
<comment type="subunit">
    <text evidence="1">Homodimer.</text>
</comment>
<comment type="similarity">
    <text evidence="1">Belongs to the tRNA pseudouridine synthase TruA family.</text>
</comment>
<evidence type="ECO:0000255" key="1">
    <source>
        <dbReference type="HAMAP-Rule" id="MF_00171"/>
    </source>
</evidence>